<feature type="chain" id="PRO_0000154565" description="Interferon regulatory factor 8">
    <location>
        <begin position="1"/>
        <end position="424"/>
    </location>
</feature>
<feature type="DNA-binding region" description="IRF tryptophan pentad repeat" evidence="3">
    <location>
        <begin position="7"/>
        <end position="114"/>
    </location>
</feature>
<accession>P23611</accession>
<evidence type="ECO:0000250" key="1"/>
<evidence type="ECO:0000250" key="2">
    <source>
        <dbReference type="UniProtKB" id="Q02556"/>
    </source>
</evidence>
<evidence type="ECO:0000255" key="3">
    <source>
        <dbReference type="PROSITE-ProRule" id="PRU00840"/>
    </source>
</evidence>
<evidence type="ECO:0000269" key="4">
    <source>
    </source>
</evidence>
<evidence type="ECO:0000269" key="5">
    <source>
    </source>
</evidence>
<evidence type="ECO:0000269" key="6">
    <source>
    </source>
</evidence>
<evidence type="ECO:0000269" key="7">
    <source>
    </source>
</evidence>
<evidence type="ECO:0000269" key="8">
    <source>
    </source>
</evidence>
<evidence type="ECO:0000269" key="9">
    <source>
    </source>
</evidence>
<evidence type="ECO:0000269" key="10">
    <source>
    </source>
</evidence>
<evidence type="ECO:0000269" key="11">
    <source>
    </source>
</evidence>
<evidence type="ECO:0000303" key="12">
    <source>
    </source>
</evidence>
<evidence type="ECO:0000303" key="13">
    <source>
    </source>
</evidence>
<evidence type="ECO:0000312" key="14">
    <source>
        <dbReference type="MGI" id="MGI:96395"/>
    </source>
</evidence>
<reference key="1">
    <citation type="journal article" date="1990" name="Proc. Natl. Acad. Sci. U.S.A.">
        <title>An interferon gamma-regulated protein that binds the interferon-inducible enhancer element of major histocompatibility complex class I genes.</title>
        <authorList>
            <person name="Driggers P.H."/>
            <person name="Ennist D.L."/>
            <person name="Gleason S.L."/>
            <person name="Mak W.-H."/>
            <person name="Marks M.S."/>
            <person name="Levi B.-Z."/>
            <person name="Flanagan J.R."/>
            <person name="Appella E."/>
            <person name="Ozato K."/>
        </authorList>
    </citation>
    <scope>NUCLEOTIDE SEQUENCE [MRNA]</scope>
    <scope>FUNCTION</scope>
    <scope>TISSUE SPECIFICITY</scope>
</reference>
<reference key="2">
    <citation type="journal article" date="2005" name="Science">
        <title>The transcriptional landscape of the mammalian genome.</title>
        <authorList>
            <person name="Carninci P."/>
            <person name="Kasukawa T."/>
            <person name="Katayama S."/>
            <person name="Gough J."/>
            <person name="Frith M.C."/>
            <person name="Maeda N."/>
            <person name="Oyama R."/>
            <person name="Ravasi T."/>
            <person name="Lenhard B."/>
            <person name="Wells C."/>
            <person name="Kodzius R."/>
            <person name="Shimokawa K."/>
            <person name="Bajic V.B."/>
            <person name="Brenner S.E."/>
            <person name="Batalov S."/>
            <person name="Forrest A.R."/>
            <person name="Zavolan M."/>
            <person name="Davis M.J."/>
            <person name="Wilming L.G."/>
            <person name="Aidinis V."/>
            <person name="Allen J.E."/>
            <person name="Ambesi-Impiombato A."/>
            <person name="Apweiler R."/>
            <person name="Aturaliya R.N."/>
            <person name="Bailey T.L."/>
            <person name="Bansal M."/>
            <person name="Baxter L."/>
            <person name="Beisel K.W."/>
            <person name="Bersano T."/>
            <person name="Bono H."/>
            <person name="Chalk A.M."/>
            <person name="Chiu K.P."/>
            <person name="Choudhary V."/>
            <person name="Christoffels A."/>
            <person name="Clutterbuck D.R."/>
            <person name="Crowe M.L."/>
            <person name="Dalla E."/>
            <person name="Dalrymple B.P."/>
            <person name="de Bono B."/>
            <person name="Della Gatta G."/>
            <person name="di Bernardo D."/>
            <person name="Down T."/>
            <person name="Engstrom P."/>
            <person name="Fagiolini M."/>
            <person name="Faulkner G."/>
            <person name="Fletcher C.F."/>
            <person name="Fukushima T."/>
            <person name="Furuno M."/>
            <person name="Futaki S."/>
            <person name="Gariboldi M."/>
            <person name="Georgii-Hemming P."/>
            <person name="Gingeras T.R."/>
            <person name="Gojobori T."/>
            <person name="Green R.E."/>
            <person name="Gustincich S."/>
            <person name="Harbers M."/>
            <person name="Hayashi Y."/>
            <person name="Hensch T.K."/>
            <person name="Hirokawa N."/>
            <person name="Hill D."/>
            <person name="Huminiecki L."/>
            <person name="Iacono M."/>
            <person name="Ikeo K."/>
            <person name="Iwama A."/>
            <person name="Ishikawa T."/>
            <person name="Jakt M."/>
            <person name="Kanapin A."/>
            <person name="Katoh M."/>
            <person name="Kawasawa Y."/>
            <person name="Kelso J."/>
            <person name="Kitamura H."/>
            <person name="Kitano H."/>
            <person name="Kollias G."/>
            <person name="Krishnan S.P."/>
            <person name="Kruger A."/>
            <person name="Kummerfeld S.K."/>
            <person name="Kurochkin I.V."/>
            <person name="Lareau L.F."/>
            <person name="Lazarevic D."/>
            <person name="Lipovich L."/>
            <person name="Liu J."/>
            <person name="Liuni S."/>
            <person name="McWilliam S."/>
            <person name="Madan Babu M."/>
            <person name="Madera M."/>
            <person name="Marchionni L."/>
            <person name="Matsuda H."/>
            <person name="Matsuzawa S."/>
            <person name="Miki H."/>
            <person name="Mignone F."/>
            <person name="Miyake S."/>
            <person name="Morris K."/>
            <person name="Mottagui-Tabar S."/>
            <person name="Mulder N."/>
            <person name="Nakano N."/>
            <person name="Nakauchi H."/>
            <person name="Ng P."/>
            <person name="Nilsson R."/>
            <person name="Nishiguchi S."/>
            <person name="Nishikawa S."/>
            <person name="Nori F."/>
            <person name="Ohara O."/>
            <person name="Okazaki Y."/>
            <person name="Orlando V."/>
            <person name="Pang K.C."/>
            <person name="Pavan W.J."/>
            <person name="Pavesi G."/>
            <person name="Pesole G."/>
            <person name="Petrovsky N."/>
            <person name="Piazza S."/>
            <person name="Reed J."/>
            <person name="Reid J.F."/>
            <person name="Ring B.Z."/>
            <person name="Ringwald M."/>
            <person name="Rost B."/>
            <person name="Ruan Y."/>
            <person name="Salzberg S.L."/>
            <person name="Sandelin A."/>
            <person name="Schneider C."/>
            <person name="Schoenbach C."/>
            <person name="Sekiguchi K."/>
            <person name="Semple C.A."/>
            <person name="Seno S."/>
            <person name="Sessa L."/>
            <person name="Sheng Y."/>
            <person name="Shibata Y."/>
            <person name="Shimada H."/>
            <person name="Shimada K."/>
            <person name="Silva D."/>
            <person name="Sinclair B."/>
            <person name="Sperling S."/>
            <person name="Stupka E."/>
            <person name="Sugiura K."/>
            <person name="Sultana R."/>
            <person name="Takenaka Y."/>
            <person name="Taki K."/>
            <person name="Tammoja K."/>
            <person name="Tan S.L."/>
            <person name="Tang S."/>
            <person name="Taylor M.S."/>
            <person name="Tegner J."/>
            <person name="Teichmann S.A."/>
            <person name="Ueda H.R."/>
            <person name="van Nimwegen E."/>
            <person name="Verardo R."/>
            <person name="Wei C.L."/>
            <person name="Yagi K."/>
            <person name="Yamanishi H."/>
            <person name="Zabarovsky E."/>
            <person name="Zhu S."/>
            <person name="Zimmer A."/>
            <person name="Hide W."/>
            <person name="Bult C."/>
            <person name="Grimmond S.M."/>
            <person name="Teasdale R.D."/>
            <person name="Liu E.T."/>
            <person name="Brusic V."/>
            <person name="Quackenbush J."/>
            <person name="Wahlestedt C."/>
            <person name="Mattick J.S."/>
            <person name="Hume D.A."/>
            <person name="Kai C."/>
            <person name="Sasaki D."/>
            <person name="Tomaru Y."/>
            <person name="Fukuda S."/>
            <person name="Kanamori-Katayama M."/>
            <person name="Suzuki M."/>
            <person name="Aoki J."/>
            <person name="Arakawa T."/>
            <person name="Iida J."/>
            <person name="Imamura K."/>
            <person name="Itoh M."/>
            <person name="Kato T."/>
            <person name="Kawaji H."/>
            <person name="Kawagashira N."/>
            <person name="Kawashima T."/>
            <person name="Kojima M."/>
            <person name="Kondo S."/>
            <person name="Konno H."/>
            <person name="Nakano K."/>
            <person name="Ninomiya N."/>
            <person name="Nishio T."/>
            <person name="Okada M."/>
            <person name="Plessy C."/>
            <person name="Shibata K."/>
            <person name="Shiraki T."/>
            <person name="Suzuki S."/>
            <person name="Tagami M."/>
            <person name="Waki K."/>
            <person name="Watahiki A."/>
            <person name="Okamura-Oho Y."/>
            <person name="Suzuki H."/>
            <person name="Kawai J."/>
            <person name="Hayashizaki Y."/>
        </authorList>
    </citation>
    <scope>NUCLEOTIDE SEQUENCE [LARGE SCALE MRNA]</scope>
    <source>
        <strain>C57BL/6J</strain>
        <tissue>Colon</tissue>
    </source>
</reference>
<reference key="3">
    <citation type="journal article" date="2004" name="Genome Res.">
        <title>The status, quality, and expansion of the NIH full-length cDNA project: the Mammalian Gene Collection (MGC).</title>
        <authorList>
            <consortium name="The MGC Project Team"/>
        </authorList>
    </citation>
    <scope>NUCLEOTIDE SEQUENCE [LARGE SCALE MRNA]</scope>
    <source>
        <strain>C57BL/6J</strain>
        <tissue>Mammary gland</tissue>
    </source>
</reference>
<reference key="4">
    <citation type="journal article" date="2002" name="J. Exp. Med.">
        <title>ICSBP is essential for the development of mouse type I interferon-producing cells and for the generation and activation of CD8alpha(+) dendritic cells.</title>
        <authorList>
            <person name="Schiavoni G."/>
            <person name="Mattei F."/>
            <person name="Sestili P."/>
            <person name="Borghi P."/>
            <person name="Venditti M."/>
            <person name="Morse H.C. III"/>
            <person name="Belardelli F."/>
            <person name="Gabriele L."/>
        </authorList>
    </citation>
    <scope>FUNCTION</scope>
    <scope>DISRUPTION PHENOTYPE</scope>
</reference>
<reference key="5">
    <citation type="journal article" date="2003" name="Blood">
        <title>Essential role for ICSBP in the in vivo development of murine CD8alpha + dendritic cells.</title>
        <authorList>
            <person name="Aliberti J."/>
            <person name="Schulz O."/>
            <person name="Pennington D.J."/>
            <person name="Tsujimura H."/>
            <person name="Reis e Sousa C."/>
            <person name="Ozato K."/>
            <person name="Sher A."/>
        </authorList>
    </citation>
    <scope>FUNCTION</scope>
    <scope>TISSUE SPECIFICITY</scope>
    <scope>DISRUPTION PHENOTYPE</scope>
</reference>
<reference key="6">
    <citation type="journal article" date="2003" name="J. Immunol.">
        <title>IFN consensus sequence binding protein/IFN regulatory factor 8 drives the development of type I IFN-producing plasmacytoid dendritic cells.</title>
        <authorList>
            <person name="Tsujimura H."/>
            <person name="Tamura T."/>
            <person name="Ozato K."/>
        </authorList>
    </citation>
    <scope>FUNCTION</scope>
    <scope>DISRUPTION PHENOTYPE</scope>
</reference>
<reference key="7">
    <citation type="journal article" date="2007" name="J. Immunol.">
        <title>Autoantigen Ro52 is an interferon inducible E3 ligase that ubiquitinates IRF-8 and enhances cytokine expression in macrophages.</title>
        <authorList>
            <person name="Kong H.J."/>
            <person name="Anderson D.E."/>
            <person name="Lee C.H."/>
            <person name="Jang M.K."/>
            <person name="Tamura T."/>
            <person name="Tailor P."/>
            <person name="Cho H.K."/>
            <person name="Cheong J."/>
            <person name="Xiong H."/>
            <person name="Morse H.C. III"/>
            <person name="Ozato K."/>
        </authorList>
    </citation>
    <scope>INTERACTION WITH TRIM21</scope>
    <scope>UBIQUITINATION</scope>
    <scope>INDUCTION</scope>
    <scope>SUBCELLULAR LOCATION</scope>
</reference>
<reference key="8">
    <citation type="journal article" date="2010" name="Cell">
        <title>A tissue-specific atlas of mouse protein phosphorylation and expression.</title>
        <authorList>
            <person name="Huttlin E.L."/>
            <person name="Jedrychowski M.P."/>
            <person name="Elias J.E."/>
            <person name="Goswami T."/>
            <person name="Rad R."/>
            <person name="Beausoleil S.A."/>
            <person name="Villen J."/>
            <person name="Haas W."/>
            <person name="Sowa M.E."/>
            <person name="Gygi S.P."/>
        </authorList>
    </citation>
    <scope>IDENTIFICATION BY MASS SPECTROMETRY [LARGE SCALE ANALYSIS]</scope>
    <source>
        <tissue>Spleen</tissue>
    </source>
</reference>
<reference key="9">
    <citation type="journal article" date="2012" name="Nature">
        <title>Compensatory dendritic cell development mediated by BATF-IRF interactions.</title>
        <authorList>
            <person name="Tussiwand R."/>
            <person name="Lee W.L."/>
            <person name="Murphy T.L."/>
            <person name="Mashayekhi M."/>
            <person name="Kc W."/>
            <person name="Albring J.C."/>
            <person name="Satpathy A.T."/>
            <person name="Rotondo J.A."/>
            <person name="Edelson B.T."/>
            <person name="Kretzer N.M."/>
            <person name="Wu X."/>
            <person name="Weiss L.A."/>
            <person name="Glasmacher E."/>
            <person name="Li P."/>
            <person name="Liao W."/>
            <person name="Behnke M."/>
            <person name="Lam S.S."/>
            <person name="Aurthur C.T."/>
            <person name="Leonard W.J."/>
            <person name="Singh H."/>
            <person name="Stallings C.L."/>
            <person name="Sibley L.D."/>
            <person name="Schreiber R.D."/>
            <person name="Murphy K.M."/>
        </authorList>
    </citation>
    <scope>FUNCTION</scope>
    <scope>INTERACTION WITH BATF</scope>
</reference>
<reference key="10">
    <citation type="journal article" date="2013" name="Proc. Natl. Acad. Sci. U.S.A.">
        <title>Essential requirement for IRF8 and SLC15A4 implicates plasmacytoid dendritic cells in the pathogenesis of lupus.</title>
        <authorList>
            <person name="Baccala R."/>
            <person name="Gonzalez-Quintial R."/>
            <person name="Blasius A.L."/>
            <person name="Rimann I."/>
            <person name="Ozato K."/>
            <person name="Kono D.H."/>
            <person name="Beutler B."/>
            <person name="Theofilopoulos A.N."/>
        </authorList>
    </citation>
    <scope>FUNCTION</scope>
    <scope>DISRUPTION PHENOTYPE</scope>
</reference>
<reference key="11">
    <citation type="journal article" date="2020" name="FASEB J.">
        <title>Early estrogen-induced gene 1 facilitates osteoclast formation through the inhibition of interferon regulatory factor 8 expression.</title>
        <authorList>
            <person name="Jeong E."/>
            <person name="Kim J."/>
            <person name="Go M."/>
            <person name="Lee S.Y."/>
        </authorList>
    </citation>
    <scope>FUNCTION</scope>
    <scope>TISSUE SPECIFICITY</scope>
</reference>
<sequence length="424" mass="48237">MCDRNGGRRLRQWLIEQIDSSMYPGLIWENDEKTMFRIPWKHAGKQDYNQEVDASIFKAWAVFKGKFKEGDKAEPATWKTRLRCALNKSPDFEEVTDRSQLDISEPYKVYRIVPEEEQKCKLGVAPAGCMSEVPEMECGRSEIEELIKEPSVDEYMGMTKRSPSPPEACRSQILPDWWVQQPSAGLPLVTGYAAYDTHHSAFSQMVISFYYGGKLVGQATTTCLEGCRLSLSQPGLPKLYGPDGLEPVCFPTADTIPSERQRQVTRKLFGHLERGVLLHSNRKGVFVKRLCQGRVFCSGNAVVCKGRPNKLERDEVVQVFDTNQFIRELQQFYATQSRLPDSRVVLCFGEEFPDTVPLRSKLILVQVEQLYARQLVEEAGKSCGAGSLMPALEEPQPDQAFRMFPDICTSHQRPFFRENQQITV</sequence>
<dbReference type="EMBL" id="M32489">
    <property type="protein sequence ID" value="AAA37878.1"/>
    <property type="molecule type" value="mRNA"/>
</dbReference>
<dbReference type="EMBL" id="AK018533">
    <property type="protein sequence ID" value="BAB31258.1"/>
    <property type="molecule type" value="mRNA"/>
</dbReference>
<dbReference type="EMBL" id="BC005450">
    <property type="protein sequence ID" value="AAH05450.1"/>
    <property type="molecule type" value="mRNA"/>
</dbReference>
<dbReference type="CCDS" id="CCDS22721.1"/>
<dbReference type="PIR" id="A35861">
    <property type="entry name" value="A35861"/>
</dbReference>
<dbReference type="RefSeq" id="NP_001288740.1">
    <property type="nucleotide sequence ID" value="NM_001301811.1"/>
</dbReference>
<dbReference type="RefSeq" id="NP_032346.1">
    <property type="nucleotide sequence ID" value="NM_008320.4"/>
</dbReference>
<dbReference type="SMR" id="P23611"/>
<dbReference type="BioGRID" id="200504">
    <property type="interactions" value="6"/>
</dbReference>
<dbReference type="CORUM" id="P23611"/>
<dbReference type="FunCoup" id="P23611">
    <property type="interactions" value="2392"/>
</dbReference>
<dbReference type="IntAct" id="P23611">
    <property type="interactions" value="1"/>
</dbReference>
<dbReference type="STRING" id="10090.ENSMUSP00000040245"/>
<dbReference type="iPTMnet" id="P23611"/>
<dbReference type="PhosphoSitePlus" id="P23611"/>
<dbReference type="SwissPalm" id="P23611"/>
<dbReference type="PaxDb" id="10090-ENSMUSP00000040245"/>
<dbReference type="PeptideAtlas" id="P23611"/>
<dbReference type="ProteomicsDB" id="267007"/>
<dbReference type="Antibodypedia" id="1058">
    <property type="antibodies" value="455 antibodies from 41 providers"/>
</dbReference>
<dbReference type="DNASU" id="15900"/>
<dbReference type="Ensembl" id="ENSMUST00000047737.10">
    <property type="protein sequence ID" value="ENSMUSP00000040245.4"/>
    <property type="gene ID" value="ENSMUSG00000041515.11"/>
</dbReference>
<dbReference type="Ensembl" id="ENSMUST00000162001.8">
    <property type="protein sequence ID" value="ENSMUSP00000125029.2"/>
    <property type="gene ID" value="ENSMUSG00000041515.11"/>
</dbReference>
<dbReference type="GeneID" id="15900"/>
<dbReference type="KEGG" id="mmu:15900"/>
<dbReference type="UCSC" id="uc009nrk.2">
    <property type="organism name" value="mouse"/>
</dbReference>
<dbReference type="AGR" id="MGI:96395"/>
<dbReference type="CTD" id="3394"/>
<dbReference type="MGI" id="MGI:96395">
    <property type="gene designation" value="Irf8"/>
</dbReference>
<dbReference type="VEuPathDB" id="HostDB:ENSMUSG00000041515"/>
<dbReference type="eggNOG" id="ENOG502QT9P">
    <property type="taxonomic scope" value="Eukaryota"/>
</dbReference>
<dbReference type="GeneTree" id="ENSGT00940000158140"/>
<dbReference type="HOGENOM" id="CLU_031544_1_1_1"/>
<dbReference type="InParanoid" id="P23611"/>
<dbReference type="OMA" id="EICASHQ"/>
<dbReference type="OrthoDB" id="9922389at2759"/>
<dbReference type="PhylomeDB" id="P23611"/>
<dbReference type="TreeFam" id="TF328512"/>
<dbReference type="BioGRID-ORCS" id="15900">
    <property type="hits" value="1 hit in 79 CRISPR screens"/>
</dbReference>
<dbReference type="ChiTaRS" id="Irf8">
    <property type="organism name" value="mouse"/>
</dbReference>
<dbReference type="PRO" id="PR:P23611"/>
<dbReference type="Proteomes" id="UP000000589">
    <property type="component" value="Chromosome 8"/>
</dbReference>
<dbReference type="RNAct" id="P23611">
    <property type="molecule type" value="protein"/>
</dbReference>
<dbReference type="Bgee" id="ENSMUSG00000041515">
    <property type="expression patterns" value="Expressed in ileal epithelium and 177 other cell types or tissues"/>
</dbReference>
<dbReference type="ExpressionAtlas" id="P23611">
    <property type="expression patterns" value="baseline and differential"/>
</dbReference>
<dbReference type="GO" id="GO:0005737">
    <property type="term" value="C:cytoplasm"/>
    <property type="evidence" value="ECO:0000250"/>
    <property type="project" value="UniProtKB"/>
</dbReference>
<dbReference type="GO" id="GO:0005654">
    <property type="term" value="C:nucleoplasm"/>
    <property type="evidence" value="ECO:0007669"/>
    <property type="project" value="Ensembl"/>
</dbReference>
<dbReference type="GO" id="GO:0005634">
    <property type="term" value="C:nucleus"/>
    <property type="evidence" value="ECO:0000314"/>
    <property type="project" value="MGI"/>
</dbReference>
<dbReference type="GO" id="GO:0003677">
    <property type="term" value="F:DNA binding"/>
    <property type="evidence" value="ECO:0000314"/>
    <property type="project" value="MGI"/>
</dbReference>
<dbReference type="GO" id="GO:0003700">
    <property type="term" value="F:DNA-binding transcription factor activity"/>
    <property type="evidence" value="ECO:0000304"/>
    <property type="project" value="MGI"/>
</dbReference>
<dbReference type="GO" id="GO:0001227">
    <property type="term" value="F:DNA-binding transcription repressor activity, RNA polymerase II-specific"/>
    <property type="evidence" value="ECO:0007669"/>
    <property type="project" value="Ensembl"/>
</dbReference>
<dbReference type="GO" id="GO:0000978">
    <property type="term" value="F:RNA polymerase II cis-regulatory region sequence-specific DNA binding"/>
    <property type="evidence" value="ECO:0007669"/>
    <property type="project" value="Ensembl"/>
</dbReference>
<dbReference type="GO" id="GO:0000977">
    <property type="term" value="F:RNA polymerase II transcription regulatory region sequence-specific DNA binding"/>
    <property type="evidence" value="ECO:0000314"/>
    <property type="project" value="MGI"/>
</dbReference>
<dbReference type="GO" id="GO:0006914">
    <property type="term" value="P:autophagy"/>
    <property type="evidence" value="ECO:0007669"/>
    <property type="project" value="UniProtKB-KW"/>
</dbReference>
<dbReference type="GO" id="GO:0071222">
    <property type="term" value="P:cellular response to lipopolysaccharide"/>
    <property type="evidence" value="ECO:0000315"/>
    <property type="project" value="MGI"/>
</dbReference>
<dbReference type="GO" id="GO:0071346">
    <property type="term" value="P:cellular response to type II interferon"/>
    <property type="evidence" value="ECO:0000250"/>
    <property type="project" value="UniProtKB"/>
</dbReference>
<dbReference type="GO" id="GO:0042742">
    <property type="term" value="P:defense response to bacterium"/>
    <property type="evidence" value="ECO:0000315"/>
    <property type="project" value="MGI"/>
</dbReference>
<dbReference type="GO" id="GO:0042832">
    <property type="term" value="P:defense response to protozoan"/>
    <property type="evidence" value="ECO:0000315"/>
    <property type="project" value="MGI"/>
</dbReference>
<dbReference type="GO" id="GO:0097028">
    <property type="term" value="P:dendritic cell differentiation"/>
    <property type="evidence" value="ECO:0000315"/>
    <property type="project" value="UniProtKB"/>
</dbReference>
<dbReference type="GO" id="GO:0002316">
    <property type="term" value="P:follicular B cell differentiation"/>
    <property type="evidence" value="ECO:0000316"/>
    <property type="project" value="ARUK-UCL"/>
</dbReference>
<dbReference type="GO" id="GO:0002314">
    <property type="term" value="P:germinal center B cell differentiation"/>
    <property type="evidence" value="ECO:0000316"/>
    <property type="project" value="ARUK-UCL"/>
</dbReference>
<dbReference type="GO" id="GO:0006955">
    <property type="term" value="P:immune response"/>
    <property type="evidence" value="ECO:0000315"/>
    <property type="project" value="UniProtKB"/>
</dbReference>
<dbReference type="GO" id="GO:0030099">
    <property type="term" value="P:myeloid cell differentiation"/>
    <property type="evidence" value="ECO:0000315"/>
    <property type="project" value="MGI"/>
</dbReference>
<dbReference type="GO" id="GO:0000122">
    <property type="term" value="P:negative regulation of transcription by RNA polymerase II"/>
    <property type="evidence" value="ECO:0000315"/>
    <property type="project" value="UniProtKB"/>
</dbReference>
<dbReference type="GO" id="GO:0006909">
    <property type="term" value="P:phagocytosis"/>
    <property type="evidence" value="ECO:0000315"/>
    <property type="project" value="MGI"/>
</dbReference>
<dbReference type="GO" id="GO:0002273">
    <property type="term" value="P:plasmacytoid dendritic cell differentiation"/>
    <property type="evidence" value="ECO:0000315"/>
    <property type="project" value="UniProtKB"/>
</dbReference>
<dbReference type="GO" id="GO:0043065">
    <property type="term" value="P:positive regulation of apoptotic process"/>
    <property type="evidence" value="ECO:0007669"/>
    <property type="project" value="Ensembl"/>
</dbReference>
<dbReference type="GO" id="GO:0045893">
    <property type="term" value="P:positive regulation of DNA-templated transcription"/>
    <property type="evidence" value="ECO:0000353"/>
    <property type="project" value="MGI"/>
</dbReference>
<dbReference type="GO" id="GO:0032735">
    <property type="term" value="P:positive regulation of interleukin-12 production"/>
    <property type="evidence" value="ECO:0000315"/>
    <property type="project" value="MGI"/>
</dbReference>
<dbReference type="GO" id="GO:0045944">
    <property type="term" value="P:positive regulation of transcription by RNA polymerase II"/>
    <property type="evidence" value="ECO:0000316"/>
    <property type="project" value="ARUK-UCL"/>
</dbReference>
<dbReference type="GO" id="GO:0032729">
    <property type="term" value="P:positive regulation of type II interferon production"/>
    <property type="evidence" value="ECO:0000315"/>
    <property type="project" value="MGI"/>
</dbReference>
<dbReference type="GO" id="GO:0006355">
    <property type="term" value="P:regulation of DNA-templated transcription"/>
    <property type="evidence" value="ECO:0000304"/>
    <property type="project" value="MGI"/>
</dbReference>
<dbReference type="GO" id="GO:0032479">
    <property type="term" value="P:regulation of type I interferon production"/>
    <property type="evidence" value="ECO:0000315"/>
    <property type="project" value="UniProtKB"/>
</dbReference>
<dbReference type="GO" id="GO:0009617">
    <property type="term" value="P:response to bacterium"/>
    <property type="evidence" value="ECO:0000315"/>
    <property type="project" value="MGI"/>
</dbReference>
<dbReference type="CDD" id="cd00103">
    <property type="entry name" value="IRF"/>
    <property type="match status" value="1"/>
</dbReference>
<dbReference type="FunFam" id="1.10.10.10:FF:000041">
    <property type="entry name" value="Interferon regulatory factor 4"/>
    <property type="match status" value="1"/>
</dbReference>
<dbReference type="FunFam" id="2.60.200.10:FF:000010">
    <property type="entry name" value="Interferon regulatory factor 8"/>
    <property type="match status" value="1"/>
</dbReference>
<dbReference type="Gene3D" id="2.60.200.10">
    <property type="match status" value="1"/>
</dbReference>
<dbReference type="Gene3D" id="1.10.10.10">
    <property type="entry name" value="Winged helix-like DNA-binding domain superfamily/Winged helix DNA-binding domain"/>
    <property type="match status" value="1"/>
</dbReference>
<dbReference type="InterPro" id="IPR019817">
    <property type="entry name" value="Interferon_reg_fac_CS"/>
</dbReference>
<dbReference type="InterPro" id="IPR001346">
    <property type="entry name" value="Interferon_reg_fact_DNA-bd_dom"/>
</dbReference>
<dbReference type="InterPro" id="IPR019471">
    <property type="entry name" value="Interferon_reg_factor-3"/>
</dbReference>
<dbReference type="InterPro" id="IPR017855">
    <property type="entry name" value="SMAD-like_dom_sf"/>
</dbReference>
<dbReference type="InterPro" id="IPR008984">
    <property type="entry name" value="SMAD_FHA_dom_sf"/>
</dbReference>
<dbReference type="InterPro" id="IPR036388">
    <property type="entry name" value="WH-like_DNA-bd_sf"/>
</dbReference>
<dbReference type="InterPro" id="IPR036390">
    <property type="entry name" value="WH_DNA-bd_sf"/>
</dbReference>
<dbReference type="PANTHER" id="PTHR11949">
    <property type="entry name" value="INTERFERON REGULATORY FACTOR"/>
    <property type="match status" value="1"/>
</dbReference>
<dbReference type="PANTHER" id="PTHR11949:SF7">
    <property type="entry name" value="INTERFERON REGULATORY FACTOR 8"/>
    <property type="match status" value="1"/>
</dbReference>
<dbReference type="Pfam" id="PF00605">
    <property type="entry name" value="IRF"/>
    <property type="match status" value="1"/>
</dbReference>
<dbReference type="Pfam" id="PF10401">
    <property type="entry name" value="IRF-3"/>
    <property type="match status" value="1"/>
</dbReference>
<dbReference type="PRINTS" id="PR00267">
    <property type="entry name" value="INTFRNREGFCT"/>
</dbReference>
<dbReference type="SMART" id="SM00348">
    <property type="entry name" value="IRF"/>
    <property type="match status" value="1"/>
</dbReference>
<dbReference type="SMART" id="SM01243">
    <property type="entry name" value="IRF-3"/>
    <property type="match status" value="1"/>
</dbReference>
<dbReference type="SUPFAM" id="SSF49879">
    <property type="entry name" value="SMAD/FHA domain"/>
    <property type="match status" value="1"/>
</dbReference>
<dbReference type="SUPFAM" id="SSF46785">
    <property type="entry name" value="Winged helix' DNA-binding domain"/>
    <property type="match status" value="1"/>
</dbReference>
<dbReference type="PROSITE" id="PS00601">
    <property type="entry name" value="IRF_1"/>
    <property type="match status" value="1"/>
</dbReference>
<dbReference type="PROSITE" id="PS51507">
    <property type="entry name" value="IRF_2"/>
    <property type="match status" value="1"/>
</dbReference>
<comment type="function">
    <text evidence="2 4 5 6 8 9 10 11">Transcription factor that specifically binds to the upstream regulatory region of type I interferon (IFN) and IFN-inducible MHC class I genes (the interferon consensus sequence (ICS)) (PubMed:12393690, PubMed:2111015). Can both act as a transcriptional activator or repressor (PubMed:2111015). Plays a negative regulatory role in cells of the immune system (PubMed:2111015). Involved in CD8(+) dendritic cell differentiation by forming a complex with the BATF-JUNB heterodimer in immune cells, leading to recognition of AICE sequence (5'-TGAnTCA/GAAA-3'), an immune-specific regulatory element, followed by cooperative binding of BATF and IRF8 and activation of genes (PubMed:12393690, PubMed:22992524). Required for the development of plasmacytoid dendritic cells (pDCs), which produce most of the type I IFN in response to viral infection (PubMed:12393690, PubMed:12461077, PubMed:12538667, PubMed:23382217). Positively regulates macroautophagy in dendritic cells (By similarity). Acts as a transcriptional repressor of osteoclast differentiation factors such as NFATC1 and EEIG1 (PubMed:32741026).</text>
</comment>
<comment type="subunit">
    <text evidence="1 2 7 9">Interacts with COPS2 (By similarity). Interacts (via C-terminus) with TRIM21 (via C-terminus). Interacts with the BATF-JUNB heterodimer. Interacts with BATF (via bZIP domain); the interaction is direct. Interacts with SPI1 (By similarity).</text>
</comment>
<comment type="subcellular location">
    <subcellularLocation>
        <location evidence="7">Nucleus</location>
    </subcellularLocation>
    <subcellularLocation>
        <location evidence="2">Cytoplasm</location>
    </subcellularLocation>
    <text evidence="2">In resting macrophages, localizes in the cytoplasm. Translocated in the nucleus upon IFN-gamma induction.</text>
</comment>
<comment type="tissue specificity">
    <text evidence="4 8 11">Expressed in bone marrow macrophages (at protein level) (PubMed:32741026). Mainly expressed in lymphoid tissues (PubMed:2111015). Predominantly expressed in CD8(+)-expressing dendritic cells (PubMed:12393690).</text>
</comment>
<comment type="induction">
    <text evidence="7">By interferon gamma.</text>
</comment>
<comment type="PTM">
    <text evidence="2 7">Ubiquitinated (PubMed:17579016). Ubiquitination by TRIM21 in macrophages, a process that is strongly increased upon interferon gamma stimulation, leds to the enhanced transcriptional activity of target cytokine genes (PubMed:17579016). Ubiquitination leads to its degradation by the proteasome (By similarity).</text>
</comment>
<comment type="PTM">
    <text evidence="2">Sumoylated with SUMO3. Desumoylated by SENP1.</text>
</comment>
<comment type="disruption phenotype">
    <text evidence="4 5 6 10">Mice display an absence of interferon (IFN)-producing cells and show impaired IFN production in response to viral infection (PubMed:12461077). Complete absence of plasmacytoid dendritic cells (pDCs) and conventional CD8(+)-expressing dendritic cells (cDCs) (PubMed:12393690, PubMed:12538667, PubMed:23382217). Mice display reduced autoimmunity (PubMed:23382217).</text>
</comment>
<comment type="similarity">
    <text evidence="3">Belongs to the IRF family.</text>
</comment>
<gene>
    <name evidence="12 14" type="primary">Irf8</name>
    <name evidence="13" type="synonym">Icsbp</name>
    <name type="synonym">Icsbp1</name>
</gene>
<proteinExistence type="evidence at protein level"/>
<name>IRF8_MOUSE</name>
<organism>
    <name type="scientific">Mus musculus</name>
    <name type="common">Mouse</name>
    <dbReference type="NCBI Taxonomy" id="10090"/>
    <lineage>
        <taxon>Eukaryota</taxon>
        <taxon>Metazoa</taxon>
        <taxon>Chordata</taxon>
        <taxon>Craniata</taxon>
        <taxon>Vertebrata</taxon>
        <taxon>Euteleostomi</taxon>
        <taxon>Mammalia</taxon>
        <taxon>Eutheria</taxon>
        <taxon>Euarchontoglires</taxon>
        <taxon>Glires</taxon>
        <taxon>Rodentia</taxon>
        <taxon>Myomorpha</taxon>
        <taxon>Muroidea</taxon>
        <taxon>Muridae</taxon>
        <taxon>Murinae</taxon>
        <taxon>Mus</taxon>
        <taxon>Mus</taxon>
    </lineage>
</organism>
<keyword id="KW-0010">Activator</keyword>
<keyword id="KW-0072">Autophagy</keyword>
<keyword id="KW-0963">Cytoplasm</keyword>
<keyword id="KW-0238">DNA-binding</keyword>
<keyword id="KW-0539">Nucleus</keyword>
<keyword id="KW-1185">Reference proteome</keyword>
<keyword id="KW-0678">Repressor</keyword>
<keyword id="KW-0804">Transcription</keyword>
<keyword id="KW-0805">Transcription regulation</keyword>
<keyword id="KW-0832">Ubl conjugation</keyword>
<protein>
    <recommendedName>
        <fullName evidence="12">Interferon regulatory factor 8</fullName>
        <shortName evidence="12">IRF-8</shortName>
    </recommendedName>
    <alternativeName>
        <fullName evidence="13">Interferon consensus sequence-binding protein</fullName>
        <shortName evidence="13">ICSBP</shortName>
    </alternativeName>
</protein>